<proteinExistence type="evidence at protein level"/>
<dbReference type="EMBL" id="K00431">
    <property type="protein sequence ID" value="AAB59066.1"/>
    <property type="status" value="ALT_INIT"/>
    <property type="molecule type" value="Genomic_DNA"/>
</dbReference>
<dbReference type="EMBL" id="U24195">
    <property type="protein sequence ID" value="AAB60069.1"/>
    <property type="status" value="ALT_INIT"/>
    <property type="molecule type" value="Genomic_DNA"/>
</dbReference>
<dbReference type="EMBL" id="U24196">
    <property type="protein sequence ID" value="AAB60077.1"/>
    <property type="status" value="ALT_INIT"/>
    <property type="molecule type" value="Genomic_DNA"/>
</dbReference>
<dbReference type="EMBL" id="U24197">
    <property type="protein sequence ID" value="AAB60085.1"/>
    <property type="status" value="ALT_INIT"/>
    <property type="molecule type" value="Genomic_DNA"/>
</dbReference>
<dbReference type="EMBL" id="U24198">
    <property type="protein sequence ID" value="AAB60093.1"/>
    <property type="status" value="ALT_INIT"/>
    <property type="molecule type" value="Genomic_DNA"/>
</dbReference>
<dbReference type="EMBL" id="U24199">
    <property type="protein sequence ID" value="AAB60101.1"/>
    <property type="status" value="ALT_INIT"/>
    <property type="molecule type" value="Genomic_DNA"/>
</dbReference>
<dbReference type="EMBL" id="U24200">
    <property type="protein sequence ID" value="AAB60109.1"/>
    <property type="status" value="ALT_INIT"/>
    <property type="molecule type" value="Genomic_DNA"/>
</dbReference>
<dbReference type="EMBL" id="U24201">
    <property type="protein sequence ID" value="AAB60117.1"/>
    <property type="status" value="ALT_INIT"/>
    <property type="molecule type" value="Genomic_DNA"/>
</dbReference>
<dbReference type="EMBL" id="U24202">
    <property type="protein sequence ID" value="AAB60125.1"/>
    <property type="status" value="ALT_INIT"/>
    <property type="molecule type" value="Genomic_DNA"/>
</dbReference>
<dbReference type="EMBL" id="U24203">
    <property type="protein sequence ID" value="AAB60133.1"/>
    <property type="status" value="ALT_INIT"/>
    <property type="molecule type" value="Genomic_DNA"/>
</dbReference>
<dbReference type="EMBL" id="U24204">
    <property type="protein sequence ID" value="AAB60141.1"/>
    <property type="status" value="ALT_INIT"/>
    <property type="molecule type" value="Genomic_DNA"/>
</dbReference>
<dbReference type="EMBL" id="U24205">
    <property type="protein sequence ID" value="AAB60149.1"/>
    <property type="status" value="ALT_INIT"/>
    <property type="molecule type" value="Genomic_DNA"/>
</dbReference>
<dbReference type="EMBL" id="U24206">
    <property type="protein sequence ID" value="AAB60157.1"/>
    <property type="status" value="ALT_INIT"/>
    <property type="molecule type" value="Genomic_DNA"/>
</dbReference>
<dbReference type="EMBL" id="U00096">
    <property type="protein sequence ID" value="AAC74334.1"/>
    <property type="molecule type" value="Genomic_DNA"/>
</dbReference>
<dbReference type="EMBL" id="AP009048">
    <property type="protein sequence ID" value="BAA14784.2"/>
    <property type="molecule type" value="Genomic_DNA"/>
</dbReference>
<dbReference type="PIR" id="G64872">
    <property type="entry name" value="BVEC"/>
</dbReference>
<dbReference type="RefSeq" id="NP_415768.1">
    <property type="nucleotide sequence ID" value="NC_000913.3"/>
</dbReference>
<dbReference type="RefSeq" id="WP_001360141.1">
    <property type="nucleotide sequence ID" value="NZ_SSZK01000031.1"/>
</dbReference>
<dbReference type="PDB" id="1IHR">
    <property type="method" value="X-ray"/>
    <property type="resolution" value="1.55 A"/>
    <property type="chains" value="A/B=164-239"/>
</dbReference>
<dbReference type="PDB" id="1QXX">
    <property type="method" value="X-ray"/>
    <property type="resolution" value="2.70 A"/>
    <property type="chains" value="A=164-239"/>
</dbReference>
<dbReference type="PDB" id="1U07">
    <property type="method" value="X-ray"/>
    <property type="resolution" value="1.13 A"/>
    <property type="chains" value="A/B=150-239"/>
</dbReference>
<dbReference type="PDB" id="1XX3">
    <property type="method" value="NMR"/>
    <property type="chains" value="A=103-239"/>
</dbReference>
<dbReference type="PDB" id="2GRX">
    <property type="method" value="X-ray"/>
    <property type="resolution" value="3.30 A"/>
    <property type="chains" value="C/D=31-239"/>
</dbReference>
<dbReference type="PDB" id="2GSK">
    <property type="method" value="X-ray"/>
    <property type="resolution" value="2.10 A"/>
    <property type="chains" value="B=153-233"/>
</dbReference>
<dbReference type="PDB" id="8P9R">
    <property type="method" value="X-ray"/>
    <property type="resolution" value="1.52 A"/>
    <property type="chains" value="C=40-62"/>
</dbReference>
<dbReference type="PDB" id="8VGC">
    <property type="method" value="X-ray"/>
    <property type="resolution" value="1.42 A"/>
    <property type="chains" value="P=43-52"/>
</dbReference>
<dbReference type="PDB" id="8VGD">
    <property type="method" value="X-ray"/>
    <property type="resolution" value="1.42 A"/>
    <property type="chains" value="P=43-51"/>
</dbReference>
<dbReference type="PDBsum" id="1IHR"/>
<dbReference type="PDBsum" id="1QXX"/>
<dbReference type="PDBsum" id="1U07"/>
<dbReference type="PDBsum" id="1XX3"/>
<dbReference type="PDBsum" id="2GRX"/>
<dbReference type="PDBsum" id="2GSK"/>
<dbReference type="PDBsum" id="8P9R"/>
<dbReference type="PDBsum" id="8VGC"/>
<dbReference type="PDBsum" id="8VGD"/>
<dbReference type="BMRB" id="P02929"/>
<dbReference type="EMDB" id="EMD-2859"/>
<dbReference type="EMDB" id="EMD-2934"/>
<dbReference type="EMDB" id="EMD-2935"/>
<dbReference type="SMR" id="P02929"/>
<dbReference type="BioGRID" id="4262996">
    <property type="interactions" value="186"/>
</dbReference>
<dbReference type="BioGRID" id="850210">
    <property type="interactions" value="1"/>
</dbReference>
<dbReference type="ComplexPortal" id="CPX-1083">
    <property type="entry name" value="Cobalamin outer membrane transporter complex"/>
</dbReference>
<dbReference type="ComplexPortal" id="CPX-2843">
    <property type="entry name" value="Ferrichrome outer membrane transporter complex"/>
</dbReference>
<dbReference type="ComplexPortal" id="CPX-3576">
    <property type="entry name" value="Ferric-citrate outer membrane transporter complex"/>
</dbReference>
<dbReference type="ComplexPortal" id="CPX-3577">
    <property type="entry name" value="Ferric-catecholate outer membrane transporter complex"/>
</dbReference>
<dbReference type="ComplexPortal" id="CPX-3578">
    <property type="entry name" value="Ferric-enterobactin outer membrane transporter complex"/>
</dbReference>
<dbReference type="ComplexPortal" id="CPX-3579">
    <property type="entry name" value="Ferric-coprogen outer membrane transporter complex"/>
</dbReference>
<dbReference type="ComplexPortal" id="CPX-3580">
    <property type="entry name" value="fiu outer membrane transporter complex"/>
</dbReference>
<dbReference type="ComplexPortal" id="CPX-3585">
    <property type="entry name" value="Uncharacterized yncD-DHBS outer membrane transporter complex"/>
</dbReference>
<dbReference type="DIP" id="DIP-48111N"/>
<dbReference type="FunCoup" id="P02929">
    <property type="interactions" value="24"/>
</dbReference>
<dbReference type="IntAct" id="P02929">
    <property type="interactions" value="8"/>
</dbReference>
<dbReference type="STRING" id="511145.b1252"/>
<dbReference type="DrugBank" id="DB02767">
    <property type="generic name" value="(R)-3-hydroxytetradecanoic acid"/>
</dbReference>
<dbReference type="DrugBank" id="DB04147">
    <property type="generic name" value="Dodecyldimethylamine N-oxide"/>
</dbReference>
<dbReference type="DrugBank" id="DB03017">
    <property type="generic name" value="Lauric acid"/>
</dbReference>
<dbReference type="DrugBank" id="DB08231">
    <property type="generic name" value="Myristic acid"/>
</dbReference>
<dbReference type="TCDB" id="2.C.1.1.1">
    <property type="family name" value="the tonb-exbb-exbd/tola-tolq-tolr outer membrane receptor energizers and stabilizers (tonb/tola) family"/>
</dbReference>
<dbReference type="jPOST" id="P02929"/>
<dbReference type="PaxDb" id="511145-b1252"/>
<dbReference type="EnsemblBacteria" id="AAC74334">
    <property type="protein sequence ID" value="AAC74334"/>
    <property type="gene ID" value="b1252"/>
</dbReference>
<dbReference type="GeneID" id="945843"/>
<dbReference type="KEGG" id="ecj:JW5195"/>
<dbReference type="KEGG" id="eco:b1252"/>
<dbReference type="KEGG" id="ecoc:C3026_07355"/>
<dbReference type="PATRIC" id="fig|511145.12.peg.1302"/>
<dbReference type="EchoBASE" id="EB1005"/>
<dbReference type="eggNOG" id="COG0810">
    <property type="taxonomic scope" value="Bacteria"/>
</dbReference>
<dbReference type="HOGENOM" id="CLU_098618_0_0_6"/>
<dbReference type="InParanoid" id="P02929"/>
<dbReference type="OMA" id="SEAQAYN"/>
<dbReference type="OrthoDB" id="1628901at2"/>
<dbReference type="PhylomeDB" id="P02929"/>
<dbReference type="BioCyc" id="EcoCyc:EG11012-MONOMER"/>
<dbReference type="BioCyc" id="MetaCyc:EG11012-MONOMER"/>
<dbReference type="EvolutionaryTrace" id="P02929"/>
<dbReference type="PRO" id="PR:P02929"/>
<dbReference type="Proteomes" id="UP000000625">
    <property type="component" value="Chromosome"/>
</dbReference>
<dbReference type="GO" id="GO:0030313">
    <property type="term" value="C:cell envelope"/>
    <property type="evidence" value="ECO:0000314"/>
    <property type="project" value="CACAO"/>
</dbReference>
<dbReference type="GO" id="GO:0009279">
    <property type="term" value="C:cell outer membrane"/>
    <property type="evidence" value="ECO:0000303"/>
    <property type="project" value="ComplexPortal"/>
</dbReference>
<dbReference type="GO" id="GO:0016020">
    <property type="term" value="C:membrane"/>
    <property type="evidence" value="ECO:0000303"/>
    <property type="project" value="ComplexPortal"/>
</dbReference>
<dbReference type="GO" id="GO:0030288">
    <property type="term" value="C:outer membrane-bounded periplasmic space"/>
    <property type="evidence" value="ECO:0000314"/>
    <property type="project" value="EcoCyc"/>
</dbReference>
<dbReference type="GO" id="GO:0005886">
    <property type="term" value="C:plasma membrane"/>
    <property type="evidence" value="ECO:0000314"/>
    <property type="project" value="EcoCyc"/>
</dbReference>
<dbReference type="GO" id="GO:0098797">
    <property type="term" value="C:plasma membrane protein complex"/>
    <property type="evidence" value="ECO:0000314"/>
    <property type="project" value="EcoCyc"/>
</dbReference>
<dbReference type="GO" id="GO:1902495">
    <property type="term" value="C:transmembrane transporter complex"/>
    <property type="evidence" value="ECO:0000303"/>
    <property type="project" value="ComplexPortal"/>
</dbReference>
<dbReference type="GO" id="GO:0031992">
    <property type="term" value="F:energy transducer activity"/>
    <property type="evidence" value="ECO:0000314"/>
    <property type="project" value="EcoCyc"/>
</dbReference>
<dbReference type="GO" id="GO:0019904">
    <property type="term" value="F:protein domain specific binding"/>
    <property type="evidence" value="ECO:0000353"/>
    <property type="project" value="CAFA"/>
</dbReference>
<dbReference type="GO" id="GO:0015889">
    <property type="term" value="P:cobalamin transport"/>
    <property type="evidence" value="ECO:0000315"/>
    <property type="project" value="EcoCyc"/>
</dbReference>
<dbReference type="GO" id="GO:0042914">
    <property type="term" value="P:colicin transport"/>
    <property type="evidence" value="ECO:0000304"/>
    <property type="project" value="EcoCyc"/>
</dbReference>
<dbReference type="GO" id="GO:0006879">
    <property type="term" value="P:intracellular iron ion homeostasis"/>
    <property type="evidence" value="ECO:0000303"/>
    <property type="project" value="ComplexPortal"/>
</dbReference>
<dbReference type="GO" id="GO:0030003">
    <property type="term" value="P:intracellular monoatomic cation homeostasis"/>
    <property type="evidence" value="ECO:0000303"/>
    <property type="project" value="ComplexPortal"/>
</dbReference>
<dbReference type="GO" id="GO:0015031">
    <property type="term" value="P:protein transport"/>
    <property type="evidence" value="ECO:0007669"/>
    <property type="project" value="UniProtKB-KW"/>
</dbReference>
<dbReference type="GO" id="GO:0098002">
    <property type="term" value="P:receptor-mediated bacteriophage irreversible attachment to host cell"/>
    <property type="evidence" value="ECO:0000304"/>
    <property type="project" value="EcoCyc"/>
</dbReference>
<dbReference type="GO" id="GO:0015891">
    <property type="term" value="P:siderophore transport"/>
    <property type="evidence" value="ECO:0000314"/>
    <property type="project" value="EcoCyc"/>
</dbReference>
<dbReference type="GO" id="GO:0055085">
    <property type="term" value="P:transmembrane transport"/>
    <property type="evidence" value="ECO:0007669"/>
    <property type="project" value="InterPro"/>
</dbReference>
<dbReference type="DisProt" id="DP00043"/>
<dbReference type="FunFam" id="3.30.2420.10:FF:000001">
    <property type="entry name" value="Protein TonB"/>
    <property type="match status" value="1"/>
</dbReference>
<dbReference type="Gene3D" id="3.30.2420.10">
    <property type="entry name" value="TonB"/>
    <property type="match status" value="1"/>
</dbReference>
<dbReference type="InterPro" id="IPR003538">
    <property type="entry name" value="TonB"/>
</dbReference>
<dbReference type="InterPro" id="IPR051045">
    <property type="entry name" value="TonB-dependent_transducer"/>
</dbReference>
<dbReference type="InterPro" id="IPR006260">
    <property type="entry name" value="TonB/TolA_C"/>
</dbReference>
<dbReference type="InterPro" id="IPR037682">
    <property type="entry name" value="TonB_C"/>
</dbReference>
<dbReference type="InterPro" id="IPR049924">
    <property type="entry name" value="TonB_pro-rich"/>
</dbReference>
<dbReference type="NCBIfam" id="NF008081">
    <property type="entry name" value="PRK10819.1-2"/>
    <property type="match status" value="1"/>
</dbReference>
<dbReference type="NCBIfam" id="NF008083">
    <property type="entry name" value="PRK10819.1-4"/>
    <property type="match status" value="1"/>
</dbReference>
<dbReference type="NCBIfam" id="TIGR01352">
    <property type="entry name" value="tonB_Cterm"/>
    <property type="match status" value="1"/>
</dbReference>
<dbReference type="PANTHER" id="PTHR33446:SF8">
    <property type="entry name" value="PROTEIN TONB"/>
    <property type="match status" value="1"/>
</dbReference>
<dbReference type="PANTHER" id="PTHR33446">
    <property type="entry name" value="PROTEIN TONB-RELATED"/>
    <property type="match status" value="1"/>
</dbReference>
<dbReference type="Pfam" id="PF03544">
    <property type="entry name" value="TonB_C"/>
    <property type="match status" value="1"/>
</dbReference>
<dbReference type="Pfam" id="PF16031">
    <property type="entry name" value="TonB_N"/>
    <property type="match status" value="1"/>
</dbReference>
<dbReference type="PRINTS" id="PR01374">
    <property type="entry name" value="TONBPROTEIN"/>
</dbReference>
<dbReference type="SUPFAM" id="SSF74653">
    <property type="entry name" value="TolA/TonB C-terminal domain"/>
    <property type="match status" value="1"/>
</dbReference>
<dbReference type="PROSITE" id="PS52015">
    <property type="entry name" value="TONB_CTD"/>
    <property type="match status" value="1"/>
</dbReference>
<reference key="1">
    <citation type="journal article" date="1983" name="Proc. Natl. Acad. Sci. U.S.A.">
        <title>DNA sequence of the Escherichia coli tonB gene.</title>
        <authorList>
            <person name="Postle K."/>
            <person name="Good R.F."/>
        </authorList>
    </citation>
    <scope>NUCLEOTIDE SEQUENCE [GENOMIC DNA]</scope>
</reference>
<reference key="2">
    <citation type="submission" date="1995-04" db="EMBL/GenBank/DDBJ databases">
        <authorList>
            <person name="Milkman R."/>
        </authorList>
    </citation>
    <scope>NUCLEOTIDE SEQUENCE [GENOMIC DNA]</scope>
    <source>
        <strain>K12</strain>
        <strain>Various ECOR strains</strain>
    </source>
</reference>
<reference key="3">
    <citation type="journal article" date="1996" name="DNA Res.">
        <title>A 570-kb DNA sequence of the Escherichia coli K-12 genome corresponding to the 28.0-40.1 min region on the linkage map.</title>
        <authorList>
            <person name="Aiba H."/>
            <person name="Baba T."/>
            <person name="Fujita K."/>
            <person name="Hayashi K."/>
            <person name="Inada T."/>
            <person name="Isono K."/>
            <person name="Itoh T."/>
            <person name="Kasai H."/>
            <person name="Kashimoto K."/>
            <person name="Kimura S."/>
            <person name="Kitakawa M."/>
            <person name="Kitagawa M."/>
            <person name="Makino K."/>
            <person name="Miki T."/>
            <person name="Mizobuchi K."/>
            <person name="Mori H."/>
            <person name="Mori T."/>
            <person name="Motomura K."/>
            <person name="Nakade S."/>
            <person name="Nakamura Y."/>
            <person name="Nashimoto H."/>
            <person name="Nishio Y."/>
            <person name="Oshima T."/>
            <person name="Saito N."/>
            <person name="Sampei G."/>
            <person name="Seki Y."/>
            <person name="Sivasundaram S."/>
            <person name="Tagami H."/>
            <person name="Takeda J."/>
            <person name="Takemoto K."/>
            <person name="Takeuchi Y."/>
            <person name="Wada C."/>
            <person name="Yamamoto Y."/>
            <person name="Horiuchi T."/>
        </authorList>
    </citation>
    <scope>NUCLEOTIDE SEQUENCE [LARGE SCALE GENOMIC DNA]</scope>
    <source>
        <strain>K12 / W3110 / ATCC 27325 / DSM 5911</strain>
    </source>
</reference>
<reference key="4">
    <citation type="journal article" date="1997" name="Science">
        <title>The complete genome sequence of Escherichia coli K-12.</title>
        <authorList>
            <person name="Blattner F.R."/>
            <person name="Plunkett G. III"/>
            <person name="Bloch C.A."/>
            <person name="Perna N.T."/>
            <person name="Burland V."/>
            <person name="Riley M."/>
            <person name="Collado-Vides J."/>
            <person name="Glasner J.D."/>
            <person name="Rode C.K."/>
            <person name="Mayhew G.F."/>
            <person name="Gregor J."/>
            <person name="Davis N.W."/>
            <person name="Kirkpatrick H.A."/>
            <person name="Goeden M.A."/>
            <person name="Rose D.J."/>
            <person name="Mau B."/>
            <person name="Shao Y."/>
        </authorList>
    </citation>
    <scope>NUCLEOTIDE SEQUENCE [LARGE SCALE GENOMIC DNA]</scope>
    <source>
        <strain>K12 / MG1655 / ATCC 47076</strain>
    </source>
</reference>
<reference key="5">
    <citation type="journal article" date="2006" name="Mol. Syst. Biol.">
        <title>Highly accurate genome sequences of Escherichia coli K-12 strains MG1655 and W3110.</title>
        <authorList>
            <person name="Hayashi K."/>
            <person name="Morooka N."/>
            <person name="Yamamoto Y."/>
            <person name="Fujita K."/>
            <person name="Isono K."/>
            <person name="Choi S."/>
            <person name="Ohtsubo E."/>
            <person name="Baba T."/>
            <person name="Wanner B.L."/>
            <person name="Mori H."/>
            <person name="Horiuchi T."/>
        </authorList>
    </citation>
    <scope>NUCLEOTIDE SEQUENCE [LARGE SCALE GENOMIC DNA]</scope>
    <source>
        <strain>K12 / W3110 / ATCC 27325 / DSM 5911</strain>
    </source>
</reference>
<reference key="6">
    <citation type="journal article" date="1991" name="J. Bacteriol.">
        <title>Analysis of Escherichia coli TonB membrane topology by use of PhoA fusions.</title>
        <authorList>
            <person name="Roof S.K."/>
            <person name="Allard J.D."/>
            <person name="Bertrand K.P."/>
            <person name="Postel K."/>
        </authorList>
    </citation>
    <scope>TOPOLOGY</scope>
</reference>
<reference key="7">
    <citation type="journal article" date="1993" name="Mol. Microbiol.">
        <title>A sequence-specific function for the N-terminal signal-like sequence of the TonB protein.</title>
        <authorList>
            <person name="Karlsson M."/>
            <person name="Hannavy K."/>
            <person name="Higgins C.F."/>
        </authorList>
    </citation>
    <scope>IMPORTANCE OF N-TERMINAL SEQUENCE</scope>
</reference>
<reference key="8">
    <citation type="journal article" date="2009" name="Mol. Cell">
        <title>Hydroxyurea induces hydroxyl radical-mediated cell death in Escherichia coli.</title>
        <authorList>
            <person name="Davies B.W."/>
            <person name="Kohanski M.A."/>
            <person name="Simmons L.A."/>
            <person name="Winkler J.A."/>
            <person name="Collins J.J."/>
            <person name="Walker G.C."/>
        </authorList>
    </citation>
    <scope>FUNCTION</scope>
    <scope>INDUCTION BY HYDROXYUREA</scope>
    <scope>DISRUPTION PHENOTYPE</scope>
    <source>
        <strain>K12 / MC4100 / ATCC 35695 / DSM 6574</strain>
    </source>
</reference>
<reference key="9">
    <citation type="journal article" date="2001" name="J. Biol. Chem.">
        <title>Crystal structure of the dimeric C-terminal domain of TonB reveals a novel fold.</title>
        <authorList>
            <person name="Chang C."/>
            <person name="Mooser A."/>
            <person name="Plueckthun A."/>
            <person name="Wlodawer A."/>
        </authorList>
    </citation>
    <scope>X-RAY CRYSTALLOGRAPHY (1.55 ANGSTROMS) OF 164-239</scope>
</reference>
<accession>P02929</accession>
<accession>P76831</accession>
<accession>P94719</accession>
<accession>P94722</accession>
<accession>P94726</accession>
<accession>P94728</accession>
<accession>P94732</accession>
<accession>P94736</accession>
<accession>P94739</accession>
<accession>P97239</accession>
<protein>
    <recommendedName>
        <fullName>Protein TonB</fullName>
    </recommendedName>
</protein>
<keyword id="KW-0002">3D-structure</keyword>
<keyword id="KW-0080">Bacteriocin transport</keyword>
<keyword id="KW-0997">Cell inner membrane</keyword>
<keyword id="KW-1003">Cell membrane</keyword>
<keyword id="KW-0472">Membrane</keyword>
<keyword id="KW-0653">Protein transport</keyword>
<keyword id="KW-1185">Reference proteome</keyword>
<keyword id="KW-0677">Repeat</keyword>
<keyword id="KW-0735">Signal-anchor</keyword>
<keyword id="KW-0812">Transmembrane</keyword>
<keyword id="KW-1133">Transmembrane helix</keyword>
<keyword id="KW-0813">Transport</keyword>
<evidence type="ECO:0000255" key="1">
    <source>
        <dbReference type="PROSITE-ProRule" id="PRU01359"/>
    </source>
</evidence>
<evidence type="ECO:0000256" key="2">
    <source>
        <dbReference type="SAM" id="MobiDB-lite"/>
    </source>
</evidence>
<evidence type="ECO:0000269" key="3">
    <source>
    </source>
</evidence>
<evidence type="ECO:0000305" key="4"/>
<evidence type="ECO:0000305" key="5">
    <source>
    </source>
</evidence>
<evidence type="ECO:0007829" key="6">
    <source>
        <dbReference type="PDB" id="1QXX"/>
    </source>
</evidence>
<evidence type="ECO:0007829" key="7">
    <source>
        <dbReference type="PDB" id="1U07"/>
    </source>
</evidence>
<evidence type="ECO:0007829" key="8">
    <source>
        <dbReference type="PDB" id="8VGC"/>
    </source>
</evidence>
<gene>
    <name type="primary">tonB</name>
    <name type="synonym">exbA</name>
    <name type="ordered locus">b1252</name>
    <name type="ordered locus">JW5195</name>
</gene>
<name>TONB_ECOLI</name>
<organism>
    <name type="scientific">Escherichia coli (strain K12)</name>
    <dbReference type="NCBI Taxonomy" id="83333"/>
    <lineage>
        <taxon>Bacteria</taxon>
        <taxon>Pseudomonadati</taxon>
        <taxon>Pseudomonadota</taxon>
        <taxon>Gammaproteobacteria</taxon>
        <taxon>Enterobacterales</taxon>
        <taxon>Enterobacteriaceae</taxon>
        <taxon>Escherichia</taxon>
    </lineage>
</organism>
<sequence length="239" mass="26094">MTLDLPRRFPWPTLLSVCIHGAVVAGLLYTSVHQVIELPAPAQPISVTMVTPADLEPPQAVQPPPEPVVEPEPEPEPIPEPPKEAPVVIEKPKPKPKPKPKPVKKVQEQPKRDVKPVESRPASPFENTAPARLTSSTATAATSKPVTSVASGPRALSRNQPQYPARAQALRIEGQVKVKFDVTPDGRVDNVQILSAKPANMFEREVKNAMRRWRYEPGKPGSGIVVNILFKINGTTEIQ</sequence>
<feature type="chain" id="PRO_0000196194" description="Protein TonB">
    <location>
        <begin position="1"/>
        <end position="239"/>
    </location>
</feature>
<feature type="transmembrane region" description="Helical; Signal-anchor" evidence="4">
    <location>
        <begin position="1"/>
        <end position="32"/>
    </location>
</feature>
<feature type="topological domain" description="Periplasmic" evidence="5">
    <location>
        <begin position="33"/>
        <end position="239"/>
    </location>
</feature>
<feature type="repeat" description="1-1">
    <location>
        <begin position="70"/>
        <end position="71"/>
    </location>
</feature>
<feature type="repeat" description="1-2">
    <location>
        <begin position="72"/>
        <end position="73"/>
    </location>
</feature>
<feature type="repeat" description="1-3">
    <location>
        <begin position="74"/>
        <end position="75"/>
    </location>
</feature>
<feature type="repeat" description="1-4">
    <location>
        <begin position="76"/>
        <end position="77"/>
    </location>
</feature>
<feature type="repeat" description="1-5; approximate">
    <location>
        <begin position="78"/>
        <end position="79"/>
    </location>
</feature>
<feature type="repeat" description="1-6">
    <location>
        <begin position="80"/>
        <end position="81"/>
    </location>
</feature>
<feature type="repeat" description="2-1">
    <location>
        <begin position="91"/>
        <end position="92"/>
    </location>
</feature>
<feature type="repeat" description="2-2">
    <location>
        <begin position="93"/>
        <end position="94"/>
    </location>
</feature>
<feature type="repeat" description="2-3">
    <location>
        <begin position="95"/>
        <end position="96"/>
    </location>
</feature>
<feature type="repeat" description="2-4">
    <location>
        <begin position="97"/>
        <end position="98"/>
    </location>
</feature>
<feature type="repeat" description="2-5">
    <location>
        <begin position="99"/>
        <end position="100"/>
    </location>
</feature>
<feature type="repeat" description="2-6">
    <location>
        <begin position="101"/>
        <end position="102"/>
    </location>
</feature>
<feature type="domain" description="TonB C-terminal" evidence="1">
    <location>
        <begin position="148"/>
        <end position="239"/>
    </location>
</feature>
<feature type="region of interest" description="Disordered" evidence="2">
    <location>
        <begin position="55"/>
        <end position="162"/>
    </location>
</feature>
<feature type="region of interest" description="6 X 2 AA approximate tandem repeats of E-P">
    <location>
        <begin position="70"/>
        <end position="81"/>
    </location>
</feature>
<feature type="region of interest" description="6 X 2 AA tandem repeats of K-P">
    <location>
        <begin position="91"/>
        <end position="102"/>
    </location>
</feature>
<feature type="compositionally biased region" description="Basic residues" evidence="2">
    <location>
        <begin position="94"/>
        <end position="104"/>
    </location>
</feature>
<feature type="compositionally biased region" description="Basic and acidic residues" evidence="2">
    <location>
        <begin position="105"/>
        <end position="118"/>
    </location>
</feature>
<feature type="compositionally biased region" description="Low complexity" evidence="2">
    <location>
        <begin position="128"/>
        <end position="151"/>
    </location>
</feature>
<feature type="sequence variant" description="In strain: ECOR 28, ECOR 31, ECOR 37, ECOR 46, ECOR 50, ECOR 52, ECOR 60 and ECOR 71.">
    <original>T</original>
    <variation>A</variation>
    <location>
        <position position="51"/>
    </location>
</feature>
<feature type="sequence variant" description="In strain: ECOR 31.">
    <original>E</original>
    <variation>K</variation>
    <location>
        <position position="70"/>
    </location>
</feature>
<feature type="sequence variant" description="In strain: ECOR 37 and ECOR 71.">
    <original>V</original>
    <variation>A</variation>
    <location>
        <position position="87"/>
    </location>
</feature>
<feature type="sequence variant" description="In strain: ECOR 50.">
    <original>P</original>
    <variation>PKP</variation>
    <location>
        <position position="102"/>
    </location>
</feature>
<feature type="sequence variant" description="In strain: ECOR 52 and ECOR 60.">
    <location>
        <position position="107"/>
    </location>
</feature>
<feature type="sequence variant" description="In strain: ECOR 28.">
    <original>V</original>
    <variation>I</variation>
    <location>
        <position position="114"/>
    </location>
</feature>
<feature type="sequence variant" description="In strain: ECOR 16, ECOR 31, ECOR 46, ECOR 50, ECOR 52 and ECOR 60.">
    <original>L</original>
    <variation>P</variation>
    <location>
        <position position="133"/>
    </location>
</feature>
<feature type="sequence variant" description="In strain: ECOR 60.">
    <original>V</original>
    <variation>I</variation>
    <location>
        <position position="176"/>
    </location>
</feature>
<feature type="strand" evidence="8">
    <location>
        <begin position="45"/>
        <end position="50"/>
    </location>
</feature>
<feature type="strand" evidence="7">
    <location>
        <begin position="155"/>
        <end position="157"/>
    </location>
</feature>
<feature type="helix" evidence="7">
    <location>
        <begin position="165"/>
        <end position="170"/>
    </location>
</feature>
<feature type="strand" evidence="7">
    <location>
        <begin position="174"/>
        <end position="182"/>
    </location>
</feature>
<feature type="strand" evidence="6">
    <location>
        <begin position="184"/>
        <end position="186"/>
    </location>
</feature>
<feature type="strand" evidence="7">
    <location>
        <begin position="188"/>
        <end position="202"/>
    </location>
</feature>
<feature type="helix" evidence="7">
    <location>
        <begin position="203"/>
        <end position="210"/>
    </location>
</feature>
<feature type="strand" evidence="7">
    <location>
        <begin position="221"/>
        <end position="238"/>
    </location>
</feature>
<comment type="function">
    <text evidence="3">Interacts with outer membrane receptor proteins that carry out high-affinity binding and energy dependent uptake into the periplasmic space of specific substrates such as cobalamin, and various iron compounds (such as iron dicitrate, enterochelin, aerobactin, etc.). In the absence of TonB these receptors bind their substrates but do not carry out active transport. TonB also interacts with some colicins and is involved in the energy-dependent, irreversible steps of bacteriophages phi 80 and T1 infection. It could act to transduce energy from the cytoplasmic membrane to specific energy-requiring processes in the outer membrane, resulting in the release into the periplasm of ligands bound by these outer membrane proteins. Implicated in hydroxy radical-mediated cell death induced by hydroxyurea treatment (PubMed:20005847).</text>
</comment>
<comment type="subunit">
    <text>Homodimer. Forms a complex with the accessory proteins ExbB and ExbD.</text>
</comment>
<comment type="interaction">
    <interactant intactId="EBI-6399993">
        <id>P02929</id>
    </interactant>
    <interactant intactId="EBI-6399986">
        <id>P0ABU7</id>
        <label>exbB</label>
    </interactant>
    <organismsDiffer>false</organismsDiffer>
    <experiments>2</experiments>
</comment>
<comment type="interaction">
    <interactant intactId="EBI-6399993">
        <id>P02929</id>
    </interactant>
    <interactant intactId="EBI-6417016">
        <id>P0ABV2</id>
        <label>exbD</label>
    </interactant>
    <organismsDiffer>false</organismsDiffer>
    <experiments>3</experiments>
</comment>
<comment type="interaction">
    <interactant intactId="EBI-6399993">
        <id>P02929</id>
    </interactant>
    <interactant intactId="EBI-1131517">
        <id>P13036</id>
        <label>fecA</label>
    </interactant>
    <organismsDiffer>false</organismsDiffer>
    <experiments>3</experiments>
</comment>
<comment type="interaction">
    <interactant intactId="EBI-6399993">
        <id>P02929</id>
    </interactant>
    <interactant intactId="EBI-6400027">
        <id>P05825</id>
        <label>fepA</label>
    </interactant>
    <organismsDiffer>false</organismsDiffer>
    <experiments>2</experiments>
</comment>
<comment type="interaction">
    <interactant intactId="EBI-6399993">
        <id>P02929</id>
    </interactant>
    <interactant intactId="EBI-1116714">
        <id>P06971</id>
        <label>fhuA</label>
    </interactant>
    <organismsDiffer>false</organismsDiffer>
    <experiments>4</experiments>
</comment>
<comment type="interaction">
    <interactant intactId="EBI-6399993">
        <id>P02929</id>
    </interactant>
    <interactant intactId="EBI-909750">
        <id>P69776</id>
        <label>lpp</label>
    </interactant>
    <organismsDiffer>false</organismsDiffer>
    <experiments>2</experiments>
</comment>
<comment type="subcellular location">
    <subcellularLocation>
        <location>Cell inner membrane</location>
        <topology>Single-pass membrane protein</topology>
        <orientation>Periplasmic side</orientation>
    </subcellularLocation>
</comment>
<comment type="induction">
    <text evidence="3">2-fold by hydroxyurea treatment.</text>
</comment>
<comment type="disruption phenotype">
    <text evidence="3">Cells missing tonB survive hydroxyurea treatment better than wild-type; further disruption of mazE-mazF and relE-relB yields even better survival (PubMed:20005847).</text>
</comment>
<comment type="similarity">
    <text evidence="4">Belongs to the TonB family.</text>
</comment>
<comment type="sequence caution" evidence="4">
    <conflict type="erroneous initiation">
        <sequence resource="EMBL-CDS" id="AAB59066"/>
    </conflict>
    <text>Extended N-terminus.</text>
</comment>
<comment type="sequence caution" evidence="4">
    <conflict type="erroneous initiation">
        <sequence resource="EMBL-CDS" id="AAB60069"/>
    </conflict>
    <text>Extended N-terminus.</text>
</comment>
<comment type="sequence caution" evidence="4">
    <conflict type="erroneous initiation">
        <sequence resource="EMBL-CDS" id="AAB60077"/>
    </conflict>
    <text>Extended N-terminus.</text>
</comment>
<comment type="sequence caution" evidence="4">
    <conflict type="erroneous initiation">
        <sequence resource="EMBL-CDS" id="AAB60085"/>
    </conflict>
    <text>Extended N-terminus.</text>
</comment>
<comment type="sequence caution" evidence="4">
    <conflict type="erroneous initiation">
        <sequence resource="EMBL-CDS" id="AAB60093"/>
    </conflict>
    <text>Extended N-terminus.</text>
</comment>
<comment type="sequence caution" evidence="4">
    <conflict type="erroneous initiation">
        <sequence resource="EMBL-CDS" id="AAB60101"/>
    </conflict>
    <text>Extended N-terminus.</text>
</comment>
<comment type="sequence caution" evidence="4">
    <conflict type="erroneous initiation">
        <sequence resource="EMBL-CDS" id="AAB60109"/>
    </conflict>
    <text>Extended N-terminus.</text>
</comment>
<comment type="sequence caution" evidence="4">
    <conflict type="erroneous initiation">
        <sequence resource="EMBL-CDS" id="AAB60117"/>
    </conflict>
    <text>Extended N-terminus.</text>
</comment>
<comment type="sequence caution" evidence="4">
    <conflict type="erroneous initiation">
        <sequence resource="EMBL-CDS" id="AAB60125"/>
    </conflict>
    <text>Extended N-terminus.</text>
</comment>
<comment type="sequence caution" evidence="4">
    <conflict type="erroneous initiation">
        <sequence resource="EMBL-CDS" id="AAB60133"/>
    </conflict>
    <text>Extended N-terminus.</text>
</comment>
<comment type="sequence caution" evidence="4">
    <conflict type="erroneous initiation">
        <sequence resource="EMBL-CDS" id="AAB60141"/>
    </conflict>
    <text>Extended N-terminus.</text>
</comment>
<comment type="sequence caution" evidence="4">
    <conflict type="erroneous initiation">
        <sequence resource="EMBL-CDS" id="AAB60149"/>
    </conflict>
    <text>Extended N-terminus.</text>
</comment>
<comment type="sequence caution" evidence="4">
    <conflict type="erroneous initiation">
        <sequence resource="EMBL-CDS" id="AAB60157"/>
    </conflict>
    <text>Extended N-terminus.</text>
</comment>